<name>RS21_BACMK</name>
<feature type="chain" id="PRO_1000120588" description="Small ribosomal subunit protein bS21">
    <location>
        <begin position="1"/>
        <end position="57"/>
    </location>
</feature>
<protein>
    <recommendedName>
        <fullName evidence="1">Small ribosomal subunit protein bS21</fullName>
    </recommendedName>
    <alternativeName>
        <fullName evidence="2">30S ribosomal protein S21</fullName>
    </alternativeName>
</protein>
<proteinExistence type="inferred from homology"/>
<comment type="similarity">
    <text evidence="1">Belongs to the bacterial ribosomal protein bS21 family.</text>
</comment>
<accession>A9VHT6</accession>
<organism>
    <name type="scientific">Bacillus mycoides (strain KBAB4)</name>
    <name type="common">Bacillus weihenstephanensis</name>
    <dbReference type="NCBI Taxonomy" id="315730"/>
    <lineage>
        <taxon>Bacteria</taxon>
        <taxon>Bacillati</taxon>
        <taxon>Bacillota</taxon>
        <taxon>Bacilli</taxon>
        <taxon>Bacillales</taxon>
        <taxon>Bacillaceae</taxon>
        <taxon>Bacillus</taxon>
        <taxon>Bacillus cereus group</taxon>
    </lineage>
</organism>
<sequence>MSKTVVRKNESLEDALRRFKRSVSKTGTLAEARKREFYEKPSVKRKKKSEAARKRKF</sequence>
<evidence type="ECO:0000255" key="1">
    <source>
        <dbReference type="HAMAP-Rule" id="MF_00358"/>
    </source>
</evidence>
<evidence type="ECO:0000305" key="2"/>
<gene>
    <name evidence="1" type="primary">rpsU</name>
    <name type="ordered locus">BcerKBAB4_4160</name>
</gene>
<reference key="1">
    <citation type="journal article" date="2008" name="Chem. Biol. Interact.">
        <title>Extending the Bacillus cereus group genomics to putative food-borne pathogens of different toxicity.</title>
        <authorList>
            <person name="Lapidus A."/>
            <person name="Goltsman E."/>
            <person name="Auger S."/>
            <person name="Galleron N."/>
            <person name="Segurens B."/>
            <person name="Dossat C."/>
            <person name="Land M.L."/>
            <person name="Broussolle V."/>
            <person name="Brillard J."/>
            <person name="Guinebretiere M.-H."/>
            <person name="Sanchis V."/>
            <person name="Nguen-the C."/>
            <person name="Lereclus D."/>
            <person name="Richardson P."/>
            <person name="Wincker P."/>
            <person name="Weissenbach J."/>
            <person name="Ehrlich S.D."/>
            <person name="Sorokin A."/>
        </authorList>
    </citation>
    <scope>NUCLEOTIDE SEQUENCE [LARGE SCALE GENOMIC DNA]</scope>
    <source>
        <strain>KBAB4</strain>
    </source>
</reference>
<dbReference type="EMBL" id="CP000903">
    <property type="protein sequence ID" value="ABY45321.1"/>
    <property type="molecule type" value="Genomic_DNA"/>
</dbReference>
<dbReference type="RefSeq" id="WP_000048061.1">
    <property type="nucleotide sequence ID" value="NC_010184.1"/>
</dbReference>
<dbReference type="SMR" id="A9VHT6"/>
<dbReference type="GeneID" id="93006791"/>
<dbReference type="KEGG" id="bwe:BcerKBAB4_4160"/>
<dbReference type="eggNOG" id="COG0828">
    <property type="taxonomic scope" value="Bacteria"/>
</dbReference>
<dbReference type="HOGENOM" id="CLU_159258_3_2_9"/>
<dbReference type="Proteomes" id="UP000002154">
    <property type="component" value="Chromosome"/>
</dbReference>
<dbReference type="GO" id="GO:1990904">
    <property type="term" value="C:ribonucleoprotein complex"/>
    <property type="evidence" value="ECO:0007669"/>
    <property type="project" value="UniProtKB-KW"/>
</dbReference>
<dbReference type="GO" id="GO:0005840">
    <property type="term" value="C:ribosome"/>
    <property type="evidence" value="ECO:0007669"/>
    <property type="project" value="UniProtKB-KW"/>
</dbReference>
<dbReference type="GO" id="GO:0003735">
    <property type="term" value="F:structural constituent of ribosome"/>
    <property type="evidence" value="ECO:0007669"/>
    <property type="project" value="InterPro"/>
</dbReference>
<dbReference type="GO" id="GO:0006412">
    <property type="term" value="P:translation"/>
    <property type="evidence" value="ECO:0007669"/>
    <property type="project" value="UniProtKB-UniRule"/>
</dbReference>
<dbReference type="Gene3D" id="1.20.5.1150">
    <property type="entry name" value="Ribosomal protein S8"/>
    <property type="match status" value="1"/>
</dbReference>
<dbReference type="HAMAP" id="MF_00358">
    <property type="entry name" value="Ribosomal_bS21"/>
    <property type="match status" value="1"/>
</dbReference>
<dbReference type="InterPro" id="IPR001911">
    <property type="entry name" value="Ribosomal_bS21"/>
</dbReference>
<dbReference type="InterPro" id="IPR018278">
    <property type="entry name" value="Ribosomal_bS21_CS"/>
</dbReference>
<dbReference type="InterPro" id="IPR038380">
    <property type="entry name" value="Ribosomal_bS21_sf"/>
</dbReference>
<dbReference type="NCBIfam" id="TIGR00030">
    <property type="entry name" value="S21p"/>
    <property type="match status" value="1"/>
</dbReference>
<dbReference type="PANTHER" id="PTHR21109">
    <property type="entry name" value="MITOCHONDRIAL 28S RIBOSOMAL PROTEIN S21"/>
    <property type="match status" value="1"/>
</dbReference>
<dbReference type="PANTHER" id="PTHR21109:SF22">
    <property type="entry name" value="SMALL RIBOSOMAL SUBUNIT PROTEIN BS21"/>
    <property type="match status" value="1"/>
</dbReference>
<dbReference type="Pfam" id="PF01165">
    <property type="entry name" value="Ribosomal_S21"/>
    <property type="match status" value="1"/>
</dbReference>
<dbReference type="PRINTS" id="PR00976">
    <property type="entry name" value="RIBOSOMALS21"/>
</dbReference>
<dbReference type="PROSITE" id="PS01181">
    <property type="entry name" value="RIBOSOMAL_S21"/>
    <property type="match status" value="1"/>
</dbReference>
<keyword id="KW-0687">Ribonucleoprotein</keyword>
<keyword id="KW-0689">Ribosomal protein</keyword>